<comment type="function">
    <text evidence="2">Plays a role in mitochondrial complex IV assembly.</text>
</comment>
<comment type="subunit">
    <text evidence="1">Interacts with COX7A2.</text>
</comment>
<comment type="subcellular location">
    <subcellularLocation>
        <location evidence="5">Membrane</location>
        <topology evidence="5">Single-pass membrane protein</topology>
    </subcellularLocation>
    <subcellularLocation>
        <location evidence="4">Mitochondrion</location>
    </subcellularLocation>
    <subcellularLocation>
        <location evidence="2">Mitochondrion inner membrane</location>
    </subcellularLocation>
</comment>
<comment type="similarity">
    <text evidence="5">Belongs to the PET100 family.</text>
</comment>
<organism>
    <name type="scientific">Mus musculus</name>
    <name type="common">Mouse</name>
    <dbReference type="NCBI Taxonomy" id="10090"/>
    <lineage>
        <taxon>Eukaryota</taxon>
        <taxon>Metazoa</taxon>
        <taxon>Chordata</taxon>
        <taxon>Craniata</taxon>
        <taxon>Vertebrata</taxon>
        <taxon>Euteleostomi</taxon>
        <taxon>Mammalia</taxon>
        <taxon>Eutheria</taxon>
        <taxon>Euarchontoglires</taxon>
        <taxon>Glires</taxon>
        <taxon>Rodentia</taxon>
        <taxon>Myomorpha</taxon>
        <taxon>Muroidea</taxon>
        <taxon>Muridae</taxon>
        <taxon>Murinae</taxon>
        <taxon>Mus</taxon>
        <taxon>Mus</taxon>
    </lineage>
</organism>
<sequence length="76" mass="9410">MGVKLEVFRMSLYLTFPVVMFWISNQAEWFEDYVVQRKRELWPREKEGQRQELEEFKQKIRKQKEERLLQAAQQSS</sequence>
<proteinExistence type="evidence at protein level"/>
<dbReference type="EMBL" id="AK013674">
    <property type="status" value="NOT_ANNOTATED_CDS"/>
    <property type="molecule type" value="mRNA"/>
</dbReference>
<dbReference type="EMBL" id="AC170806">
    <property type="status" value="NOT_ANNOTATED_CDS"/>
    <property type="molecule type" value="Genomic_DNA"/>
</dbReference>
<dbReference type="CCDS" id="CCDS57601.1"/>
<dbReference type="RefSeq" id="NP_001182173.1">
    <property type="nucleotide sequence ID" value="NM_001195244.1"/>
</dbReference>
<dbReference type="FunCoup" id="P0DJE0">
    <property type="interactions" value="80"/>
</dbReference>
<dbReference type="STRING" id="10090.ENSMUSP00000137626"/>
<dbReference type="PhosphoSitePlus" id="P0DJE0"/>
<dbReference type="PaxDb" id="10090-ENSMUSP00000137626"/>
<dbReference type="ProteomicsDB" id="301869"/>
<dbReference type="Antibodypedia" id="77906">
    <property type="antibodies" value="27 antibodies from 7 providers"/>
</dbReference>
<dbReference type="Ensembl" id="ENSMUST00000156380.4">
    <property type="protein sequence ID" value="ENSMUSP00000137626.2"/>
    <property type="gene ID" value="ENSMUSG00000087687.4"/>
</dbReference>
<dbReference type="Ensembl" id="ENSMUST00000208950.2">
    <property type="protein sequence ID" value="ENSMUSP00000146433.2"/>
    <property type="gene ID" value="ENSMUSG00000087687.4"/>
</dbReference>
<dbReference type="GeneID" id="100503890"/>
<dbReference type="KEGG" id="mmu:100503890"/>
<dbReference type="UCSC" id="uc009krz.2">
    <property type="organism name" value="mouse"/>
</dbReference>
<dbReference type="AGR" id="MGI:3615306"/>
<dbReference type="CTD" id="100131801"/>
<dbReference type="MGI" id="MGI:3615306">
    <property type="gene designation" value="Pet100"/>
</dbReference>
<dbReference type="VEuPathDB" id="HostDB:ENSMUSG00000087687"/>
<dbReference type="eggNOG" id="KOG4702">
    <property type="taxonomic scope" value="Eukaryota"/>
</dbReference>
<dbReference type="GeneTree" id="ENSGT00390000016884"/>
<dbReference type="HOGENOM" id="CLU_194764_0_0_1"/>
<dbReference type="InParanoid" id="P0DJE0"/>
<dbReference type="OMA" id="MALYMTF"/>
<dbReference type="OrthoDB" id="18175at2759"/>
<dbReference type="PhylomeDB" id="P0DJE0"/>
<dbReference type="TreeFam" id="TF314727"/>
<dbReference type="BioGRID-ORCS" id="100503890">
    <property type="hits" value="15 hits in 76 CRISPR screens"/>
</dbReference>
<dbReference type="ChiTaRS" id="Pet100">
    <property type="organism name" value="mouse"/>
</dbReference>
<dbReference type="PRO" id="PR:P0DJE0"/>
<dbReference type="Proteomes" id="UP000000589">
    <property type="component" value="Chromosome 8"/>
</dbReference>
<dbReference type="RNAct" id="P0DJE0">
    <property type="molecule type" value="protein"/>
</dbReference>
<dbReference type="Bgee" id="ENSMUSG00000087687">
    <property type="expression patterns" value="Expressed in granulocyte and 253 other cell types or tissues"/>
</dbReference>
<dbReference type="ExpressionAtlas" id="P0DJE0">
    <property type="expression patterns" value="baseline and differential"/>
</dbReference>
<dbReference type="GO" id="GO:0005743">
    <property type="term" value="C:mitochondrial inner membrane"/>
    <property type="evidence" value="ECO:0007669"/>
    <property type="project" value="UniProtKB-SubCell"/>
</dbReference>
<dbReference type="GO" id="GO:0033617">
    <property type="term" value="P:mitochondrial cytochrome c oxidase assembly"/>
    <property type="evidence" value="ECO:0007669"/>
    <property type="project" value="InterPro"/>
</dbReference>
<dbReference type="InterPro" id="IPR018625">
    <property type="entry name" value="Pet100"/>
</dbReference>
<dbReference type="PANTHER" id="PTHR33968">
    <property type="entry name" value="PROTEIN PET100 HOMOLOG, MITOCHONDRIAL"/>
    <property type="match status" value="1"/>
</dbReference>
<dbReference type="PANTHER" id="PTHR33968:SF1">
    <property type="entry name" value="PROTEIN PET100 HOMOLOG, MITOCHONDRIAL"/>
    <property type="match status" value="1"/>
</dbReference>
<dbReference type="Pfam" id="PF09803">
    <property type="entry name" value="Pet100"/>
    <property type="match status" value="1"/>
</dbReference>
<accession>P0DJE0</accession>
<evidence type="ECO:0000250" key="1"/>
<evidence type="ECO:0000250" key="2">
    <source>
        <dbReference type="UniProtKB" id="P0DJ07"/>
    </source>
</evidence>
<evidence type="ECO:0000255" key="3"/>
<evidence type="ECO:0000269" key="4">
    <source>
    </source>
</evidence>
<evidence type="ECO:0000305" key="5"/>
<keyword id="KW-0472">Membrane</keyword>
<keyword id="KW-0496">Mitochondrion</keyword>
<keyword id="KW-0999">Mitochondrion inner membrane</keyword>
<keyword id="KW-1185">Reference proteome</keyword>
<keyword id="KW-0809">Transit peptide</keyword>
<keyword id="KW-0812">Transmembrane</keyword>
<keyword id="KW-1133">Transmembrane helix</keyword>
<name>PT100_MOUSE</name>
<feature type="transit peptide" description="Mitochondrion">
    <location>
        <begin position="1"/>
        <end status="unknown"/>
    </location>
</feature>
<feature type="chain" id="PRO_0000415814" description="Protein PET100 homolog, mitochondrial">
    <location>
        <begin status="unknown"/>
        <end position="76"/>
    </location>
</feature>
<feature type="transmembrane region" description="Helical" evidence="3">
    <location>
        <begin position="7"/>
        <end position="24"/>
    </location>
</feature>
<protein>
    <recommendedName>
        <fullName>Protein PET100 homolog, mitochondrial</fullName>
    </recommendedName>
</protein>
<reference key="1">
    <citation type="journal article" date="2005" name="Science">
        <title>The transcriptional landscape of the mammalian genome.</title>
        <authorList>
            <person name="Carninci P."/>
            <person name="Kasukawa T."/>
            <person name="Katayama S."/>
            <person name="Gough J."/>
            <person name="Frith M.C."/>
            <person name="Maeda N."/>
            <person name="Oyama R."/>
            <person name="Ravasi T."/>
            <person name="Lenhard B."/>
            <person name="Wells C."/>
            <person name="Kodzius R."/>
            <person name="Shimokawa K."/>
            <person name="Bajic V.B."/>
            <person name="Brenner S.E."/>
            <person name="Batalov S."/>
            <person name="Forrest A.R."/>
            <person name="Zavolan M."/>
            <person name="Davis M.J."/>
            <person name="Wilming L.G."/>
            <person name="Aidinis V."/>
            <person name="Allen J.E."/>
            <person name="Ambesi-Impiombato A."/>
            <person name="Apweiler R."/>
            <person name="Aturaliya R.N."/>
            <person name="Bailey T.L."/>
            <person name="Bansal M."/>
            <person name="Baxter L."/>
            <person name="Beisel K.W."/>
            <person name="Bersano T."/>
            <person name="Bono H."/>
            <person name="Chalk A.M."/>
            <person name="Chiu K.P."/>
            <person name="Choudhary V."/>
            <person name="Christoffels A."/>
            <person name="Clutterbuck D.R."/>
            <person name="Crowe M.L."/>
            <person name="Dalla E."/>
            <person name="Dalrymple B.P."/>
            <person name="de Bono B."/>
            <person name="Della Gatta G."/>
            <person name="di Bernardo D."/>
            <person name="Down T."/>
            <person name="Engstrom P."/>
            <person name="Fagiolini M."/>
            <person name="Faulkner G."/>
            <person name="Fletcher C.F."/>
            <person name="Fukushima T."/>
            <person name="Furuno M."/>
            <person name="Futaki S."/>
            <person name="Gariboldi M."/>
            <person name="Georgii-Hemming P."/>
            <person name="Gingeras T.R."/>
            <person name="Gojobori T."/>
            <person name="Green R.E."/>
            <person name="Gustincich S."/>
            <person name="Harbers M."/>
            <person name="Hayashi Y."/>
            <person name="Hensch T.K."/>
            <person name="Hirokawa N."/>
            <person name="Hill D."/>
            <person name="Huminiecki L."/>
            <person name="Iacono M."/>
            <person name="Ikeo K."/>
            <person name="Iwama A."/>
            <person name="Ishikawa T."/>
            <person name="Jakt M."/>
            <person name="Kanapin A."/>
            <person name="Katoh M."/>
            <person name="Kawasawa Y."/>
            <person name="Kelso J."/>
            <person name="Kitamura H."/>
            <person name="Kitano H."/>
            <person name="Kollias G."/>
            <person name="Krishnan S.P."/>
            <person name="Kruger A."/>
            <person name="Kummerfeld S.K."/>
            <person name="Kurochkin I.V."/>
            <person name="Lareau L.F."/>
            <person name="Lazarevic D."/>
            <person name="Lipovich L."/>
            <person name="Liu J."/>
            <person name="Liuni S."/>
            <person name="McWilliam S."/>
            <person name="Madan Babu M."/>
            <person name="Madera M."/>
            <person name="Marchionni L."/>
            <person name="Matsuda H."/>
            <person name="Matsuzawa S."/>
            <person name="Miki H."/>
            <person name="Mignone F."/>
            <person name="Miyake S."/>
            <person name="Morris K."/>
            <person name="Mottagui-Tabar S."/>
            <person name="Mulder N."/>
            <person name="Nakano N."/>
            <person name="Nakauchi H."/>
            <person name="Ng P."/>
            <person name="Nilsson R."/>
            <person name="Nishiguchi S."/>
            <person name="Nishikawa S."/>
            <person name="Nori F."/>
            <person name="Ohara O."/>
            <person name="Okazaki Y."/>
            <person name="Orlando V."/>
            <person name="Pang K.C."/>
            <person name="Pavan W.J."/>
            <person name="Pavesi G."/>
            <person name="Pesole G."/>
            <person name="Petrovsky N."/>
            <person name="Piazza S."/>
            <person name="Reed J."/>
            <person name="Reid J.F."/>
            <person name="Ring B.Z."/>
            <person name="Ringwald M."/>
            <person name="Rost B."/>
            <person name="Ruan Y."/>
            <person name="Salzberg S.L."/>
            <person name="Sandelin A."/>
            <person name="Schneider C."/>
            <person name="Schoenbach C."/>
            <person name="Sekiguchi K."/>
            <person name="Semple C.A."/>
            <person name="Seno S."/>
            <person name="Sessa L."/>
            <person name="Sheng Y."/>
            <person name="Shibata Y."/>
            <person name="Shimada H."/>
            <person name="Shimada K."/>
            <person name="Silva D."/>
            <person name="Sinclair B."/>
            <person name="Sperling S."/>
            <person name="Stupka E."/>
            <person name="Sugiura K."/>
            <person name="Sultana R."/>
            <person name="Takenaka Y."/>
            <person name="Taki K."/>
            <person name="Tammoja K."/>
            <person name="Tan S.L."/>
            <person name="Tang S."/>
            <person name="Taylor M.S."/>
            <person name="Tegner J."/>
            <person name="Teichmann S.A."/>
            <person name="Ueda H.R."/>
            <person name="van Nimwegen E."/>
            <person name="Verardo R."/>
            <person name="Wei C.L."/>
            <person name="Yagi K."/>
            <person name="Yamanishi H."/>
            <person name="Zabarovsky E."/>
            <person name="Zhu S."/>
            <person name="Zimmer A."/>
            <person name="Hide W."/>
            <person name="Bult C."/>
            <person name="Grimmond S.M."/>
            <person name="Teasdale R.D."/>
            <person name="Liu E.T."/>
            <person name="Brusic V."/>
            <person name="Quackenbush J."/>
            <person name="Wahlestedt C."/>
            <person name="Mattick J.S."/>
            <person name="Hume D.A."/>
            <person name="Kai C."/>
            <person name="Sasaki D."/>
            <person name="Tomaru Y."/>
            <person name="Fukuda S."/>
            <person name="Kanamori-Katayama M."/>
            <person name="Suzuki M."/>
            <person name="Aoki J."/>
            <person name="Arakawa T."/>
            <person name="Iida J."/>
            <person name="Imamura K."/>
            <person name="Itoh M."/>
            <person name="Kato T."/>
            <person name="Kawaji H."/>
            <person name="Kawagashira N."/>
            <person name="Kawashima T."/>
            <person name="Kojima M."/>
            <person name="Kondo S."/>
            <person name="Konno H."/>
            <person name="Nakano K."/>
            <person name="Ninomiya N."/>
            <person name="Nishio T."/>
            <person name="Okada M."/>
            <person name="Plessy C."/>
            <person name="Shibata K."/>
            <person name="Shiraki T."/>
            <person name="Suzuki S."/>
            <person name="Tagami M."/>
            <person name="Waki K."/>
            <person name="Watahiki A."/>
            <person name="Okamura-Oho Y."/>
            <person name="Suzuki H."/>
            <person name="Kawai J."/>
            <person name="Hayashizaki Y."/>
        </authorList>
    </citation>
    <scope>NUCLEOTIDE SEQUENCE [LARGE SCALE MRNA]</scope>
    <source>
        <strain>C57BL/6J</strain>
    </source>
</reference>
<reference key="2">
    <citation type="journal article" date="2009" name="PLoS Biol.">
        <title>Lineage-specific biology revealed by a finished genome assembly of the mouse.</title>
        <authorList>
            <person name="Church D.M."/>
            <person name="Goodstadt L."/>
            <person name="Hillier L.W."/>
            <person name="Zody M.C."/>
            <person name="Goldstein S."/>
            <person name="She X."/>
            <person name="Bult C.J."/>
            <person name="Agarwala R."/>
            <person name="Cherry J.L."/>
            <person name="DiCuccio M."/>
            <person name="Hlavina W."/>
            <person name="Kapustin Y."/>
            <person name="Meric P."/>
            <person name="Maglott D."/>
            <person name="Birtle Z."/>
            <person name="Marques A.C."/>
            <person name="Graves T."/>
            <person name="Zhou S."/>
            <person name="Teague B."/>
            <person name="Potamousis K."/>
            <person name="Churas C."/>
            <person name="Place M."/>
            <person name="Herschleb J."/>
            <person name="Runnheim R."/>
            <person name="Forrest D."/>
            <person name="Amos-Landgraf J."/>
            <person name="Schwartz D.C."/>
            <person name="Cheng Z."/>
            <person name="Lindblad-Toh K."/>
            <person name="Eichler E.E."/>
            <person name="Ponting C.P."/>
        </authorList>
    </citation>
    <scope>NUCLEOTIDE SEQUENCE [LARGE SCALE GENOMIC DNA]</scope>
    <source>
        <strain>C57BL/6J</strain>
    </source>
</reference>
<reference key="3">
    <citation type="journal article" date="2012" name="Genome Biol.">
        <title>Iterative orthology prediction uncovers new mitochondrial proteins and identifies C12orf62 as the human ortholog of COX14, a protein involved in the assembly of cytochrome c oxidase.</title>
        <authorList>
            <person name="Szklarczyk R."/>
            <person name="Wanschers B.F."/>
            <person name="Cuypers T.D."/>
            <person name="Esseling J.J."/>
            <person name="Riemersma M."/>
            <person name="van den Brand M.A."/>
            <person name="Gloerich J."/>
            <person name="Lasonder E."/>
            <person name="van den Heuvel L.P."/>
            <person name="Nijtmans L.G."/>
            <person name="Huynen M.A."/>
        </authorList>
    </citation>
    <scope>SUBCELLULAR LOCATION</scope>
    <scope>IDENTIFICATION BY MASS SPECTROMETRY</scope>
</reference>
<gene>
    <name type="primary">Pet100</name>
</gene>